<gene>
    <name evidence="1" type="primary">ilvD</name>
    <name type="ordered locus">RPE_4363</name>
</gene>
<sequence>MPAYRSRTSTHGRNMAGARSLWRATGMKNEDFGKPIIAVVNSFTQFVPGHVHLKDLGQLVAREIEKAGGIAKEFNTIAIDDGIAMGHDGMLYSLPSRELIADSVEYMVNGHCADAMVCISNCDKITPGMLMASLRLNIPSVFVSGGPMEAGKVVLSTGARKVDLIDAMVSAADDSMSDADVAVMEENACPTCGSCSGMFTANSMNCLTEALGLSLPGNGSVLATHADRQRLFVEAGHLIVDITRRYYEQNDDSVLPRNVASFAAFENAMSLDIAMGGSTNTVLHLLAAAQEGEVNFTMTDIDRLSRRVPCLCKVAPSVATVHMEDVHRAGGIMSILGQLDAAGLLNGDTKTVHATSLRAAIDRWDISRTNSDSVRQFYLAAPGGVPSQTAFSQSQRWDSLDTDRENGVIRSKAHAFSQDGGLAVLFGNIALDGCIVKTAGVDDSILKFSGPAVVYESQDDAVNGILTGKVKEGDVVVIRYEGPRGGPGMQEMLYPTSYLKSKGLGKACALITDGRFSGGTSGLSIGHCSPEAAEGGTIGLVETGDMIDIDIPNRGINLRVSDAVLAERRKAMEAKGKDAWKPVAPRKRKISSALKAYALFASSAAKGAVRVLKD</sequence>
<organism>
    <name type="scientific">Rhodopseudomonas palustris (strain BisA53)</name>
    <dbReference type="NCBI Taxonomy" id="316055"/>
    <lineage>
        <taxon>Bacteria</taxon>
        <taxon>Pseudomonadati</taxon>
        <taxon>Pseudomonadota</taxon>
        <taxon>Alphaproteobacteria</taxon>
        <taxon>Hyphomicrobiales</taxon>
        <taxon>Nitrobacteraceae</taxon>
        <taxon>Rhodopseudomonas</taxon>
    </lineage>
</organism>
<protein>
    <recommendedName>
        <fullName evidence="1">Dihydroxy-acid dehydratase</fullName>
        <shortName evidence="1">DAD</shortName>
        <ecNumber evidence="1">4.2.1.9</ecNumber>
    </recommendedName>
</protein>
<keyword id="KW-0001">2Fe-2S</keyword>
<keyword id="KW-0028">Amino-acid biosynthesis</keyword>
<keyword id="KW-0100">Branched-chain amino acid biosynthesis</keyword>
<keyword id="KW-0408">Iron</keyword>
<keyword id="KW-0411">Iron-sulfur</keyword>
<keyword id="KW-0456">Lyase</keyword>
<keyword id="KW-0460">Magnesium</keyword>
<keyword id="KW-0479">Metal-binding</keyword>
<accession>Q07IE7</accession>
<dbReference type="EC" id="4.2.1.9" evidence="1"/>
<dbReference type="EMBL" id="CP000463">
    <property type="protein sequence ID" value="ABJ08287.1"/>
    <property type="molecule type" value="Genomic_DNA"/>
</dbReference>
<dbReference type="SMR" id="Q07IE7"/>
<dbReference type="STRING" id="316055.RPE_4363"/>
<dbReference type="KEGG" id="rpe:RPE_4363"/>
<dbReference type="eggNOG" id="COG0129">
    <property type="taxonomic scope" value="Bacteria"/>
</dbReference>
<dbReference type="HOGENOM" id="CLU_014271_4_2_5"/>
<dbReference type="OrthoDB" id="7793094at2"/>
<dbReference type="UniPathway" id="UPA00047">
    <property type="reaction ID" value="UER00057"/>
</dbReference>
<dbReference type="UniPathway" id="UPA00049">
    <property type="reaction ID" value="UER00061"/>
</dbReference>
<dbReference type="GO" id="GO:0005829">
    <property type="term" value="C:cytosol"/>
    <property type="evidence" value="ECO:0007669"/>
    <property type="project" value="TreeGrafter"/>
</dbReference>
<dbReference type="GO" id="GO:0051537">
    <property type="term" value="F:2 iron, 2 sulfur cluster binding"/>
    <property type="evidence" value="ECO:0007669"/>
    <property type="project" value="UniProtKB-UniRule"/>
</dbReference>
<dbReference type="GO" id="GO:0004160">
    <property type="term" value="F:dihydroxy-acid dehydratase activity"/>
    <property type="evidence" value="ECO:0007669"/>
    <property type="project" value="UniProtKB-UniRule"/>
</dbReference>
<dbReference type="GO" id="GO:0000287">
    <property type="term" value="F:magnesium ion binding"/>
    <property type="evidence" value="ECO:0007669"/>
    <property type="project" value="UniProtKB-UniRule"/>
</dbReference>
<dbReference type="GO" id="GO:0009097">
    <property type="term" value="P:isoleucine biosynthetic process"/>
    <property type="evidence" value="ECO:0007669"/>
    <property type="project" value="UniProtKB-UniRule"/>
</dbReference>
<dbReference type="GO" id="GO:0009099">
    <property type="term" value="P:L-valine biosynthetic process"/>
    <property type="evidence" value="ECO:0007669"/>
    <property type="project" value="UniProtKB-UniRule"/>
</dbReference>
<dbReference type="FunFam" id="3.50.30.80:FF:000001">
    <property type="entry name" value="Dihydroxy-acid dehydratase"/>
    <property type="match status" value="1"/>
</dbReference>
<dbReference type="Gene3D" id="3.50.30.80">
    <property type="entry name" value="IlvD/EDD C-terminal domain-like"/>
    <property type="match status" value="1"/>
</dbReference>
<dbReference type="HAMAP" id="MF_00012">
    <property type="entry name" value="IlvD"/>
    <property type="match status" value="1"/>
</dbReference>
<dbReference type="InterPro" id="IPR042096">
    <property type="entry name" value="Dihydro-acid_dehy_C"/>
</dbReference>
<dbReference type="InterPro" id="IPR004404">
    <property type="entry name" value="DihydroxyA_deHydtase"/>
</dbReference>
<dbReference type="InterPro" id="IPR020558">
    <property type="entry name" value="DiOHA_6PGluconate_deHydtase_CS"/>
</dbReference>
<dbReference type="InterPro" id="IPR056740">
    <property type="entry name" value="ILV_EDD_C"/>
</dbReference>
<dbReference type="InterPro" id="IPR000581">
    <property type="entry name" value="ILV_EDD_N"/>
</dbReference>
<dbReference type="InterPro" id="IPR037237">
    <property type="entry name" value="IlvD/EDD_N"/>
</dbReference>
<dbReference type="NCBIfam" id="TIGR00110">
    <property type="entry name" value="ilvD"/>
    <property type="match status" value="1"/>
</dbReference>
<dbReference type="NCBIfam" id="NF009103">
    <property type="entry name" value="PRK12448.1"/>
    <property type="match status" value="1"/>
</dbReference>
<dbReference type="PANTHER" id="PTHR43661">
    <property type="entry name" value="D-XYLONATE DEHYDRATASE"/>
    <property type="match status" value="1"/>
</dbReference>
<dbReference type="PANTHER" id="PTHR43661:SF3">
    <property type="entry name" value="D-XYLONATE DEHYDRATASE YAGF-RELATED"/>
    <property type="match status" value="1"/>
</dbReference>
<dbReference type="Pfam" id="PF24877">
    <property type="entry name" value="ILV_EDD_C"/>
    <property type="match status" value="1"/>
</dbReference>
<dbReference type="Pfam" id="PF00920">
    <property type="entry name" value="ILVD_EDD_N"/>
    <property type="match status" value="1"/>
</dbReference>
<dbReference type="SUPFAM" id="SSF143975">
    <property type="entry name" value="IlvD/EDD N-terminal domain-like"/>
    <property type="match status" value="1"/>
</dbReference>
<dbReference type="SUPFAM" id="SSF52016">
    <property type="entry name" value="LeuD/IlvD-like"/>
    <property type="match status" value="1"/>
</dbReference>
<dbReference type="PROSITE" id="PS00886">
    <property type="entry name" value="ILVD_EDD_1"/>
    <property type="match status" value="1"/>
</dbReference>
<dbReference type="PROSITE" id="PS00887">
    <property type="entry name" value="ILVD_EDD_2"/>
    <property type="match status" value="1"/>
</dbReference>
<reference key="1">
    <citation type="submission" date="2006-09" db="EMBL/GenBank/DDBJ databases">
        <title>Complete sequence of Rhodopseudomonas palustris BisA53.</title>
        <authorList>
            <consortium name="US DOE Joint Genome Institute"/>
            <person name="Copeland A."/>
            <person name="Lucas S."/>
            <person name="Lapidus A."/>
            <person name="Barry K."/>
            <person name="Detter J.C."/>
            <person name="Glavina del Rio T."/>
            <person name="Hammon N."/>
            <person name="Israni S."/>
            <person name="Dalin E."/>
            <person name="Tice H."/>
            <person name="Pitluck S."/>
            <person name="Chain P."/>
            <person name="Malfatti S."/>
            <person name="Shin M."/>
            <person name="Vergez L."/>
            <person name="Schmutz J."/>
            <person name="Larimer F."/>
            <person name="Land M."/>
            <person name="Hauser L."/>
            <person name="Pelletier D.A."/>
            <person name="Kyrpides N."/>
            <person name="Kim E."/>
            <person name="Harwood C.S."/>
            <person name="Oda Y."/>
            <person name="Richardson P."/>
        </authorList>
    </citation>
    <scope>NUCLEOTIDE SEQUENCE [LARGE SCALE GENOMIC DNA]</scope>
    <source>
        <strain>BisA53</strain>
    </source>
</reference>
<proteinExistence type="inferred from homology"/>
<name>ILVD_RHOP5</name>
<evidence type="ECO:0000255" key="1">
    <source>
        <dbReference type="HAMAP-Rule" id="MF_00012"/>
    </source>
</evidence>
<feature type="chain" id="PRO_1000001046" description="Dihydroxy-acid dehydratase">
    <location>
        <begin position="1"/>
        <end position="614"/>
    </location>
</feature>
<feature type="active site" description="Proton acceptor" evidence="1">
    <location>
        <position position="517"/>
    </location>
</feature>
<feature type="binding site" evidence="1">
    <location>
        <position position="81"/>
    </location>
    <ligand>
        <name>Mg(2+)</name>
        <dbReference type="ChEBI" id="CHEBI:18420"/>
    </ligand>
</feature>
<feature type="binding site" evidence="1">
    <location>
        <position position="122"/>
    </location>
    <ligand>
        <name>[2Fe-2S] cluster</name>
        <dbReference type="ChEBI" id="CHEBI:190135"/>
    </ligand>
</feature>
<feature type="binding site" evidence="1">
    <location>
        <position position="123"/>
    </location>
    <ligand>
        <name>Mg(2+)</name>
        <dbReference type="ChEBI" id="CHEBI:18420"/>
    </ligand>
</feature>
<feature type="binding site" description="via carbamate group" evidence="1">
    <location>
        <position position="124"/>
    </location>
    <ligand>
        <name>Mg(2+)</name>
        <dbReference type="ChEBI" id="CHEBI:18420"/>
    </ligand>
</feature>
<feature type="binding site" evidence="1">
    <location>
        <position position="195"/>
    </location>
    <ligand>
        <name>[2Fe-2S] cluster</name>
        <dbReference type="ChEBI" id="CHEBI:190135"/>
    </ligand>
</feature>
<feature type="binding site" evidence="1">
    <location>
        <position position="491"/>
    </location>
    <ligand>
        <name>Mg(2+)</name>
        <dbReference type="ChEBI" id="CHEBI:18420"/>
    </ligand>
</feature>
<feature type="modified residue" description="N6-carboxylysine" evidence="1">
    <location>
        <position position="124"/>
    </location>
</feature>
<comment type="function">
    <text evidence="1">Functions in the biosynthesis of branched-chain amino acids. Catalyzes the dehydration of (2R,3R)-2,3-dihydroxy-3-methylpentanoate (2,3-dihydroxy-3-methylvalerate) into 2-oxo-3-methylpentanoate (2-oxo-3-methylvalerate) and of (2R)-2,3-dihydroxy-3-methylbutanoate (2,3-dihydroxyisovalerate) into 2-oxo-3-methylbutanoate (2-oxoisovalerate), the penultimate precursor to L-isoleucine and L-valine, respectively.</text>
</comment>
<comment type="catalytic activity">
    <reaction evidence="1">
        <text>(2R)-2,3-dihydroxy-3-methylbutanoate = 3-methyl-2-oxobutanoate + H2O</text>
        <dbReference type="Rhea" id="RHEA:24809"/>
        <dbReference type="ChEBI" id="CHEBI:11851"/>
        <dbReference type="ChEBI" id="CHEBI:15377"/>
        <dbReference type="ChEBI" id="CHEBI:49072"/>
        <dbReference type="EC" id="4.2.1.9"/>
    </reaction>
    <physiologicalReaction direction="left-to-right" evidence="1">
        <dbReference type="Rhea" id="RHEA:24810"/>
    </physiologicalReaction>
</comment>
<comment type="catalytic activity">
    <reaction evidence="1">
        <text>(2R,3R)-2,3-dihydroxy-3-methylpentanoate = (S)-3-methyl-2-oxopentanoate + H2O</text>
        <dbReference type="Rhea" id="RHEA:27694"/>
        <dbReference type="ChEBI" id="CHEBI:15377"/>
        <dbReference type="ChEBI" id="CHEBI:35146"/>
        <dbReference type="ChEBI" id="CHEBI:49258"/>
        <dbReference type="EC" id="4.2.1.9"/>
    </reaction>
    <physiologicalReaction direction="left-to-right" evidence="1">
        <dbReference type="Rhea" id="RHEA:27695"/>
    </physiologicalReaction>
</comment>
<comment type="cofactor">
    <cofactor evidence="1">
        <name>[2Fe-2S] cluster</name>
        <dbReference type="ChEBI" id="CHEBI:190135"/>
    </cofactor>
    <text evidence="1">Binds 1 [2Fe-2S] cluster per subunit. This cluster acts as a Lewis acid cofactor.</text>
</comment>
<comment type="cofactor">
    <cofactor evidence="1">
        <name>Mg(2+)</name>
        <dbReference type="ChEBI" id="CHEBI:18420"/>
    </cofactor>
</comment>
<comment type="pathway">
    <text evidence="1">Amino-acid biosynthesis; L-isoleucine biosynthesis; L-isoleucine from 2-oxobutanoate: step 3/4.</text>
</comment>
<comment type="pathway">
    <text evidence="1">Amino-acid biosynthesis; L-valine biosynthesis; L-valine from pyruvate: step 3/4.</text>
</comment>
<comment type="subunit">
    <text evidence="1">Homodimer.</text>
</comment>
<comment type="similarity">
    <text evidence="1">Belongs to the IlvD/Edd family.</text>
</comment>